<protein>
    <recommendedName>
        <fullName>Putative non-heme chloroperoxidase</fullName>
        <ecNumber>1.11.1.-</ecNumber>
    </recommendedName>
    <alternativeName>
        <fullName>Chloride peroxidase</fullName>
    </alternativeName>
</protein>
<organism>
    <name type="scientific">Synechocystis sp. (strain ATCC 27184 / PCC 6803 / Kazusa)</name>
    <dbReference type="NCBI Taxonomy" id="1111708"/>
    <lineage>
        <taxon>Bacteria</taxon>
        <taxon>Bacillati</taxon>
        <taxon>Cyanobacteriota</taxon>
        <taxon>Cyanophyceae</taxon>
        <taxon>Synechococcales</taxon>
        <taxon>Merismopediaceae</taxon>
        <taxon>Synechocystis</taxon>
    </lineage>
</organism>
<gene>
    <name type="ordered locus">slr0314</name>
</gene>
<keyword id="KW-0868">Chloride</keyword>
<keyword id="KW-0560">Oxidoreductase</keyword>
<keyword id="KW-0575">Peroxidase</keyword>
<keyword id="KW-1185">Reference proteome</keyword>
<evidence type="ECO:0000250" key="1">
    <source>
        <dbReference type="UniProtKB" id="P22862"/>
    </source>
</evidence>
<evidence type="ECO:0000255" key="2"/>
<evidence type="ECO:0000305" key="3"/>
<dbReference type="EC" id="1.11.1.-"/>
<dbReference type="EMBL" id="BA000022">
    <property type="protein sequence ID" value="BAA10684.1"/>
    <property type="molecule type" value="Genomic_DNA"/>
</dbReference>
<dbReference type="PIR" id="S76992">
    <property type="entry name" value="S76992"/>
</dbReference>
<dbReference type="SMR" id="Q55921"/>
<dbReference type="FunCoup" id="Q55921">
    <property type="interactions" value="179"/>
</dbReference>
<dbReference type="STRING" id="1148.gene:10500188"/>
<dbReference type="ESTHER" id="synsp-prxc">
    <property type="family name" value="Haloperoxidase"/>
</dbReference>
<dbReference type="PeroxiBase" id="5909">
    <property type="entry name" value="SYspHalNPrx"/>
</dbReference>
<dbReference type="PaxDb" id="1148-1001804"/>
<dbReference type="EnsemblBacteria" id="BAA10684">
    <property type="protein sequence ID" value="BAA10684"/>
    <property type="gene ID" value="BAA10684"/>
</dbReference>
<dbReference type="KEGG" id="syn:slr0314"/>
<dbReference type="eggNOG" id="COG2267">
    <property type="taxonomic scope" value="Bacteria"/>
</dbReference>
<dbReference type="InParanoid" id="Q55921"/>
<dbReference type="PhylomeDB" id="Q55921"/>
<dbReference type="Proteomes" id="UP000001425">
    <property type="component" value="Chromosome"/>
</dbReference>
<dbReference type="GO" id="GO:0016691">
    <property type="term" value="F:chloride peroxidase activity"/>
    <property type="evidence" value="ECO:0007669"/>
    <property type="project" value="UniProtKB-EC"/>
</dbReference>
<dbReference type="FunFam" id="3.40.50.1820:FF:000205">
    <property type="entry name" value="Non-haem bromoperoxidase BPO-A2"/>
    <property type="match status" value="1"/>
</dbReference>
<dbReference type="Gene3D" id="3.40.50.1820">
    <property type="entry name" value="alpha/beta hydrolase"/>
    <property type="match status" value="1"/>
</dbReference>
<dbReference type="InterPro" id="IPR050471">
    <property type="entry name" value="AB_hydrolase"/>
</dbReference>
<dbReference type="InterPro" id="IPR000073">
    <property type="entry name" value="AB_hydrolase_1"/>
</dbReference>
<dbReference type="InterPro" id="IPR029058">
    <property type="entry name" value="AB_hydrolase_fold"/>
</dbReference>
<dbReference type="InterPro" id="IPR000639">
    <property type="entry name" value="Epox_hydrolase-like"/>
</dbReference>
<dbReference type="PANTHER" id="PTHR43433">
    <property type="entry name" value="HYDROLASE, ALPHA/BETA FOLD FAMILY PROTEIN"/>
    <property type="match status" value="1"/>
</dbReference>
<dbReference type="PANTHER" id="PTHR43433:SF4">
    <property type="entry name" value="NON-HEME CHLOROPEROXIDASE-RELATED"/>
    <property type="match status" value="1"/>
</dbReference>
<dbReference type="Pfam" id="PF00561">
    <property type="entry name" value="Abhydrolase_1"/>
    <property type="match status" value="1"/>
</dbReference>
<dbReference type="PRINTS" id="PR00111">
    <property type="entry name" value="ABHYDROLASE"/>
</dbReference>
<dbReference type="PRINTS" id="PR00412">
    <property type="entry name" value="EPOXHYDRLASE"/>
</dbReference>
<dbReference type="SUPFAM" id="SSF53474">
    <property type="entry name" value="alpha/beta-Hydrolases"/>
    <property type="match status" value="1"/>
</dbReference>
<name>PRXC_SYNY3</name>
<feature type="chain" id="PRO_0000207064" description="Putative non-heme chloroperoxidase">
    <location>
        <begin position="1"/>
        <end position="276"/>
    </location>
</feature>
<feature type="domain" description="AB hydrolase-1" evidence="2">
    <location>
        <begin position="26"/>
        <end position="263"/>
    </location>
</feature>
<feature type="active site" evidence="1">
    <location>
        <position position="99"/>
    </location>
</feature>
<feature type="active site" evidence="1">
    <location>
        <position position="228"/>
    </location>
</feature>
<feature type="active site" evidence="1">
    <location>
        <position position="257"/>
    </location>
</feature>
<comment type="similarity">
    <text evidence="3">Belongs to the AB hydrolase superfamily. Bacterial non-heme haloperoxidase / perhydrolase family.</text>
</comment>
<sequence length="276" mass="30421">MPYVTVGQENSATIDIYYEDLGAGQPIVLIHGFPLNGDSWEKQVLVLLNAGYRVITYDRRGFGASSQPSSGYDYDTFAADLHTLMTKLDLQNTVLVGFSMGTGEVTRYLGKYGSERVQKAVLMAPVPPFLLKTNDNPEGVDQSVFDGIMKAIVDDRPAYFSAFFKEFFNVDVLLGERISNEAIQASWNVAAGASAKGTLDCVPSWLTDFRDDLPRIDVPTLIIHGDADRILPLESTAARLPKRIKNSQLEIIPGGPHAINWTHADQVNPLLLNFLQ</sequence>
<proteinExistence type="inferred from homology"/>
<reference key="1">
    <citation type="journal article" date="1995" name="DNA Res.">
        <title>Sequence analysis of the genome of the unicellular cyanobacterium Synechocystis sp. strain PCC6803. I. Sequence features in the 1 Mb region from map positions 64% to 92% of the genome.</title>
        <authorList>
            <person name="Kaneko T."/>
            <person name="Tanaka A."/>
            <person name="Sato S."/>
            <person name="Kotani H."/>
            <person name="Sazuka T."/>
            <person name="Miyajima N."/>
            <person name="Sugiura M."/>
            <person name="Tabata S."/>
        </authorList>
    </citation>
    <scope>NUCLEOTIDE SEQUENCE [LARGE SCALE GENOMIC DNA]</scope>
    <source>
        <strain>ATCC 27184 / PCC 6803 / N-1</strain>
    </source>
</reference>
<reference key="2">
    <citation type="journal article" date="1996" name="DNA Res.">
        <title>Sequence analysis of the genome of the unicellular cyanobacterium Synechocystis sp. strain PCC6803. II. Sequence determination of the entire genome and assignment of potential protein-coding regions.</title>
        <authorList>
            <person name="Kaneko T."/>
            <person name="Sato S."/>
            <person name="Kotani H."/>
            <person name="Tanaka A."/>
            <person name="Asamizu E."/>
            <person name="Nakamura Y."/>
            <person name="Miyajima N."/>
            <person name="Hirosawa M."/>
            <person name="Sugiura M."/>
            <person name="Sasamoto S."/>
            <person name="Kimura T."/>
            <person name="Hosouchi T."/>
            <person name="Matsuno A."/>
            <person name="Muraki A."/>
            <person name="Nakazaki N."/>
            <person name="Naruo K."/>
            <person name="Okumura S."/>
            <person name="Shimpo S."/>
            <person name="Takeuchi C."/>
            <person name="Wada T."/>
            <person name="Watanabe A."/>
            <person name="Yamada M."/>
            <person name="Yasuda M."/>
            <person name="Tabata S."/>
        </authorList>
    </citation>
    <scope>NUCLEOTIDE SEQUENCE [LARGE SCALE GENOMIC DNA]</scope>
    <source>
        <strain>ATCC 27184 / PCC 6803 / Kazusa</strain>
    </source>
</reference>
<accession>Q55921</accession>